<dbReference type="EC" id="3.4.22.-" evidence="2 15"/>
<dbReference type="EMBL" id="Z75105">
    <property type="protein sequence ID" value="CAA99410.1"/>
    <property type="status" value="ALT_INIT"/>
    <property type="molecule type" value="Genomic_DNA"/>
</dbReference>
<dbReference type="EMBL" id="AY692832">
    <property type="protein sequence ID" value="AAT92851.1"/>
    <property type="status" value="ALT_INIT"/>
    <property type="molecule type" value="Genomic_DNA"/>
</dbReference>
<dbReference type="EMBL" id="BK006948">
    <property type="protein sequence ID" value="DAA10972.1"/>
    <property type="molecule type" value="Genomic_DNA"/>
</dbReference>
<dbReference type="PIR" id="S67089">
    <property type="entry name" value="S67089"/>
</dbReference>
<dbReference type="RefSeq" id="NP_014840.4">
    <property type="nucleotide sequence ID" value="NM_001183616.3"/>
</dbReference>
<dbReference type="PDB" id="4F6O">
    <property type="method" value="X-ray"/>
    <property type="resolution" value="1.68 A"/>
    <property type="chains" value="A=83-432"/>
</dbReference>
<dbReference type="PDB" id="4F6P">
    <property type="method" value="X-ray"/>
    <property type="resolution" value="1.62 A"/>
    <property type="chains" value="A=83-432"/>
</dbReference>
<dbReference type="PDBsum" id="4F6O"/>
<dbReference type="PDBsum" id="4F6P"/>
<dbReference type="SMR" id="Q08601"/>
<dbReference type="BioGRID" id="34595">
    <property type="interactions" value="272"/>
</dbReference>
<dbReference type="DIP" id="DIP-2802N"/>
<dbReference type="FunCoup" id="Q08601">
    <property type="interactions" value="478"/>
</dbReference>
<dbReference type="IntAct" id="Q08601">
    <property type="interactions" value="30"/>
</dbReference>
<dbReference type="MINT" id="Q08601"/>
<dbReference type="STRING" id="4932.YOR197W"/>
<dbReference type="MEROPS" id="C14.035"/>
<dbReference type="iPTMnet" id="Q08601"/>
<dbReference type="PaxDb" id="4932-YOR197W"/>
<dbReference type="PeptideAtlas" id="Q08601"/>
<dbReference type="EnsemblFungi" id="YOR197W_mRNA">
    <property type="protein sequence ID" value="YOR197W"/>
    <property type="gene ID" value="YOR197W"/>
</dbReference>
<dbReference type="GeneID" id="854372"/>
<dbReference type="KEGG" id="sce:YOR197W"/>
<dbReference type="AGR" id="SGD:S000005723"/>
<dbReference type="SGD" id="S000005723">
    <property type="gene designation" value="MCA1"/>
</dbReference>
<dbReference type="VEuPathDB" id="FungiDB:YOR197W"/>
<dbReference type="eggNOG" id="KOG1546">
    <property type="taxonomic scope" value="Eukaryota"/>
</dbReference>
<dbReference type="HOGENOM" id="CLU_029389_0_1_1"/>
<dbReference type="InParanoid" id="Q08601"/>
<dbReference type="OMA" id="MHRIMVT"/>
<dbReference type="OrthoDB" id="3223806at2759"/>
<dbReference type="BioCyc" id="YEAST:G3O-33705-MONOMER"/>
<dbReference type="BioGRID-ORCS" id="854372">
    <property type="hits" value="3 hits in 10 CRISPR screens"/>
</dbReference>
<dbReference type="CD-CODE" id="E03F929F">
    <property type="entry name" value="Stress granule"/>
</dbReference>
<dbReference type="EvolutionaryTrace" id="Q08601"/>
<dbReference type="PRO" id="PR:Q08601"/>
<dbReference type="Proteomes" id="UP000002311">
    <property type="component" value="Chromosome XV"/>
</dbReference>
<dbReference type="RNAct" id="Q08601">
    <property type="molecule type" value="protein"/>
</dbReference>
<dbReference type="GO" id="GO:0005737">
    <property type="term" value="C:cytoplasm"/>
    <property type="evidence" value="ECO:0000318"/>
    <property type="project" value="GO_Central"/>
</dbReference>
<dbReference type="GO" id="GO:0005829">
    <property type="term" value="C:cytosol"/>
    <property type="evidence" value="ECO:0000314"/>
    <property type="project" value="SGD"/>
</dbReference>
<dbReference type="GO" id="GO:0005634">
    <property type="term" value="C:nucleus"/>
    <property type="evidence" value="ECO:0000314"/>
    <property type="project" value="SGD"/>
</dbReference>
<dbReference type="GO" id="GO:0004198">
    <property type="term" value="F:calcium-dependent cysteine-type endopeptidase activity"/>
    <property type="evidence" value="ECO:0000314"/>
    <property type="project" value="SGD"/>
</dbReference>
<dbReference type="GO" id="GO:0004197">
    <property type="term" value="F:cysteine-type endopeptidase activity"/>
    <property type="evidence" value="ECO:0000318"/>
    <property type="project" value="GO_Central"/>
</dbReference>
<dbReference type="GO" id="GO:0006915">
    <property type="term" value="P:apoptotic process"/>
    <property type="evidence" value="ECO:0000314"/>
    <property type="project" value="SGD"/>
</dbReference>
<dbReference type="GO" id="GO:0006515">
    <property type="term" value="P:protein quality control for misfolded or incompletely synthesized proteins"/>
    <property type="evidence" value="ECO:0000315"/>
    <property type="project" value="SGD"/>
</dbReference>
<dbReference type="GO" id="GO:0006508">
    <property type="term" value="P:proteolysis"/>
    <property type="evidence" value="ECO:0000318"/>
    <property type="project" value="GO_Central"/>
</dbReference>
<dbReference type="FunFam" id="3.40.50.12660:FF:000005">
    <property type="entry name" value="Mca1p"/>
    <property type="match status" value="1"/>
</dbReference>
<dbReference type="FunFam" id="3.40.50.12660:FF:000006">
    <property type="entry name" value="Mca1p"/>
    <property type="match status" value="1"/>
</dbReference>
<dbReference type="Gene3D" id="3.40.50.12660">
    <property type="match status" value="2"/>
</dbReference>
<dbReference type="InterPro" id="IPR029030">
    <property type="entry name" value="Caspase-like_dom_sf"/>
</dbReference>
<dbReference type="InterPro" id="IPR050452">
    <property type="entry name" value="Metacaspase"/>
</dbReference>
<dbReference type="InterPro" id="IPR011600">
    <property type="entry name" value="Pept_C14_caspase"/>
</dbReference>
<dbReference type="PANTHER" id="PTHR48104:SF30">
    <property type="entry name" value="METACASPASE-1"/>
    <property type="match status" value="1"/>
</dbReference>
<dbReference type="PANTHER" id="PTHR48104">
    <property type="entry name" value="METACASPASE-4"/>
    <property type="match status" value="1"/>
</dbReference>
<dbReference type="Pfam" id="PF00656">
    <property type="entry name" value="Peptidase_C14"/>
    <property type="match status" value="1"/>
</dbReference>
<dbReference type="SUPFAM" id="SSF52129">
    <property type="entry name" value="Caspase-like"/>
    <property type="match status" value="1"/>
</dbReference>
<organism>
    <name type="scientific">Saccharomyces cerevisiae (strain ATCC 204508 / S288c)</name>
    <name type="common">Baker's yeast</name>
    <dbReference type="NCBI Taxonomy" id="559292"/>
    <lineage>
        <taxon>Eukaryota</taxon>
        <taxon>Fungi</taxon>
        <taxon>Dikarya</taxon>
        <taxon>Ascomycota</taxon>
        <taxon>Saccharomycotina</taxon>
        <taxon>Saccharomycetes</taxon>
        <taxon>Saccharomycetales</taxon>
        <taxon>Saccharomycetaceae</taxon>
        <taxon>Saccharomyces</taxon>
    </lineage>
</organism>
<proteinExistence type="evidence at protein level"/>
<protein>
    <recommendedName>
        <fullName>Metacaspase-1</fullName>
        <ecNumber evidence="2 15">3.4.22.-</ecNumber>
    </recommendedName>
    <component>
        <recommendedName>
            <fullName evidence="16">Large subunit p20</fullName>
        </recommendedName>
    </component>
    <component>
        <recommendedName>
            <fullName evidence="16">Small subunit p10</fullName>
        </recommendedName>
    </component>
</protein>
<sequence length="432" mass="47982">MYPGSGRYTYNNAGGNNGYQRPMAPPPNQQYGQQYGQQYEQQYGQQYGQQNDQQFSQQYAPPPGPPPMAYNRPVYPPPQFQQEQAKAQLSNGYNNPNVNASNMYGPPQNMSLPPPQTQTIQGTDQPYQYSQCTGRRKALIIGINYIGSKNQLRGCINDAHNIFNFLTNGYGYSSDDIVILTDDQNDLVRVPTRANMIRAMQWLVKDAQPNDSLFLHYSGHGGQTEDLDGDEEDGMDDVIYPVDFETQGPIIDDEMHDIMVKPLQQGVRLTALFDSCHSGTVLDLPYTYSTKGIIKEPNIWKDVGQDGLQAAISYATGNRAALIGSLGSIFKTVKGGMGNNVDRERVRQIKFSAADVVMLSGSKDNQTSADAVEDGQNTGAMSHAFIKVMTLQPQQSYLSLLQNMRKELAGKYSQKPQLSSSHPIDVNLQFIM</sequence>
<name>MCA1_YEAST</name>
<keyword id="KW-0002">3D-structure</keyword>
<keyword id="KW-0053">Apoptosis</keyword>
<keyword id="KW-0963">Cytoplasm</keyword>
<keyword id="KW-0903">Direct protein sequencing</keyword>
<keyword id="KW-0378">Hydrolase</keyword>
<keyword id="KW-0539">Nucleus</keyword>
<keyword id="KW-0645">Protease</keyword>
<keyword id="KW-1185">Reference proteome</keyword>
<keyword id="KW-0788">Thiol protease</keyword>
<keyword id="KW-0865">Zymogen</keyword>
<evidence type="ECO:0000256" key="1">
    <source>
        <dbReference type="SAM" id="MobiDB-lite"/>
    </source>
</evidence>
<evidence type="ECO:0000269" key="2">
    <source>
    </source>
</evidence>
<evidence type="ECO:0000269" key="3">
    <source>
    </source>
</evidence>
<evidence type="ECO:0000269" key="4">
    <source>
    </source>
</evidence>
<evidence type="ECO:0000269" key="5">
    <source>
    </source>
</evidence>
<evidence type="ECO:0000269" key="6">
    <source>
    </source>
</evidence>
<evidence type="ECO:0000269" key="7">
    <source>
    </source>
</evidence>
<evidence type="ECO:0000269" key="8">
    <source>
    </source>
</evidence>
<evidence type="ECO:0000269" key="9">
    <source>
    </source>
</evidence>
<evidence type="ECO:0000269" key="10">
    <source>
    </source>
</evidence>
<evidence type="ECO:0000269" key="11">
    <source>
    </source>
</evidence>
<evidence type="ECO:0000269" key="12">
    <source>
    </source>
</evidence>
<evidence type="ECO:0000269" key="13">
    <source>
    </source>
</evidence>
<evidence type="ECO:0000269" key="14">
    <source>
    </source>
</evidence>
<evidence type="ECO:0000269" key="15">
    <source>
    </source>
</evidence>
<evidence type="ECO:0000303" key="16">
    <source>
    </source>
</evidence>
<evidence type="ECO:0000305" key="17"/>
<evidence type="ECO:0000305" key="18">
    <source>
    </source>
</evidence>
<evidence type="ECO:0000305" key="19">
    <source>
    </source>
</evidence>
<evidence type="ECO:0007744" key="20">
    <source>
        <dbReference type="PDB" id="4F6O"/>
    </source>
</evidence>
<evidence type="ECO:0007744" key="21">
    <source>
        <dbReference type="PDB" id="4F6P"/>
    </source>
</evidence>
<evidence type="ECO:0007829" key="22">
    <source>
        <dbReference type="PDB" id="4F6O"/>
    </source>
</evidence>
<evidence type="ECO:0007829" key="23">
    <source>
        <dbReference type="PDB" id="4F6P"/>
    </source>
</evidence>
<comment type="function">
    <text evidence="2 5 6 7 8 9 10 11 12 13 14 15">Cysteine protease that cleaves specifically after arginine or lysine residues (PubMed:22761449). Mediates cell death (apoptosis) triggered by oxygen stress, salt stress or chronological aging. Regulated cell death can prevent a release of toxic cellular components, thus avoiding necrotic collapse of the colony, and can also provide nutrients for healthy cells. Therefore, regulated cell death in yeast colonies can be as important for their development as are apoptosis and related processes that occur within metazoa. Promotes the removal of insoluble protein aggregates during normal growth.</text>
</comment>
<comment type="activity regulation">
    <text evidence="15">Activated by Ca(2+) which induces self-processing and is required for the activity of the mature enzyme.</text>
</comment>
<comment type="subunit">
    <text evidence="15">Monomer.</text>
</comment>
<comment type="subcellular location">
    <subcellularLocation>
        <location evidence="3">Cytoplasm</location>
    </subcellularLocation>
    <subcellularLocation>
        <location evidence="3">Nucleus</location>
    </subcellularLocation>
</comment>
<comment type="domain">
    <text evidence="14">The prion domain (PrD) is a Gln/Asn (Q/N)-rich domain. It targets the protein to insoluble protein aggregates.</text>
</comment>
<comment type="PTM">
    <text evidence="2 15">Proteolytic cleavage of the propeptide appears to occur after Arg-72 and/or Lys-86; it is not clear how the processing takes place (PubMed:11983181, PubMed:22761449). Proteolytic cleavage after Lys-331 generates a large (p20) and a small (p10) subunits (PubMed:22761449). The small subunit may be further cleaved to give rise to a shorter product starting at Gly-335 (PubMed:22761449).</text>
</comment>
<comment type="miscellaneous">
    <text evidence="4">Present with 1400 molecules/cell in log phase SD medium.</text>
</comment>
<comment type="similarity">
    <text evidence="17">Belongs to the peptidase C14B family.</text>
</comment>
<comment type="caution">
    <text evidence="17">PubMed:19174511 reported that MCA1 may have a prion form, dubbed [MCA]. However, the same authors have later not been able to reproduce these results and retracted the paper.</text>
</comment>
<comment type="sequence caution" evidence="17">
    <conflict type="erroneous initiation">
        <sequence resource="EMBL-CDS" id="AAT92851"/>
    </conflict>
</comment>
<comment type="sequence caution" evidence="17">
    <conflict type="erroneous initiation">
        <sequence resource="EMBL-CDS" id="CAA99410"/>
    </conflict>
</comment>
<reference key="1">
    <citation type="journal article" date="1997" name="Nature">
        <title>The nucleotide sequence of Saccharomyces cerevisiae chromosome XV.</title>
        <authorList>
            <person name="Dujon B."/>
            <person name="Albermann K."/>
            <person name="Aldea M."/>
            <person name="Alexandraki D."/>
            <person name="Ansorge W."/>
            <person name="Arino J."/>
            <person name="Benes V."/>
            <person name="Bohn C."/>
            <person name="Bolotin-Fukuhara M."/>
            <person name="Bordonne R."/>
            <person name="Boyer J."/>
            <person name="Camasses A."/>
            <person name="Casamayor A."/>
            <person name="Casas C."/>
            <person name="Cheret G."/>
            <person name="Cziepluch C."/>
            <person name="Daignan-Fornier B."/>
            <person name="Dang V.-D."/>
            <person name="de Haan M."/>
            <person name="Delius H."/>
            <person name="Durand P."/>
            <person name="Fairhead C."/>
            <person name="Feldmann H."/>
            <person name="Gaillon L."/>
            <person name="Galisson F."/>
            <person name="Gamo F.-J."/>
            <person name="Gancedo C."/>
            <person name="Goffeau A."/>
            <person name="Goulding S.E."/>
            <person name="Grivell L.A."/>
            <person name="Habbig B."/>
            <person name="Hand N.J."/>
            <person name="Hani J."/>
            <person name="Hattenhorst U."/>
            <person name="Hebling U."/>
            <person name="Hernando Y."/>
            <person name="Herrero E."/>
            <person name="Heumann K."/>
            <person name="Hiesel R."/>
            <person name="Hilger F."/>
            <person name="Hofmann B."/>
            <person name="Hollenberg C.P."/>
            <person name="Hughes B."/>
            <person name="Jauniaux J.-C."/>
            <person name="Kalogeropoulos A."/>
            <person name="Katsoulou C."/>
            <person name="Kordes E."/>
            <person name="Lafuente M.J."/>
            <person name="Landt O."/>
            <person name="Louis E.J."/>
            <person name="Maarse A.C."/>
            <person name="Madania A."/>
            <person name="Mannhaupt G."/>
            <person name="Marck C."/>
            <person name="Martin R.P."/>
            <person name="Mewes H.-W."/>
            <person name="Michaux G."/>
            <person name="Paces V."/>
            <person name="Parle-McDermott A.G."/>
            <person name="Pearson B.M."/>
            <person name="Perrin A."/>
            <person name="Pettersson B."/>
            <person name="Poch O."/>
            <person name="Pohl T.M."/>
            <person name="Poirey R."/>
            <person name="Portetelle D."/>
            <person name="Pujol A."/>
            <person name="Purnelle B."/>
            <person name="Ramezani Rad M."/>
            <person name="Rechmann S."/>
            <person name="Schwager C."/>
            <person name="Schweizer M."/>
            <person name="Sor F."/>
            <person name="Sterky F."/>
            <person name="Tarassov I.A."/>
            <person name="Teodoru C."/>
            <person name="Tettelin H."/>
            <person name="Thierry A."/>
            <person name="Tobiasch E."/>
            <person name="Tzermia M."/>
            <person name="Uhlen M."/>
            <person name="Unseld M."/>
            <person name="Valens M."/>
            <person name="Vandenbol M."/>
            <person name="Vetter I."/>
            <person name="Vlcek C."/>
            <person name="Voet M."/>
            <person name="Volckaert G."/>
            <person name="Voss H."/>
            <person name="Wambutt R."/>
            <person name="Wedler H."/>
            <person name="Wiemann S."/>
            <person name="Winsor B."/>
            <person name="Wolfe K.H."/>
            <person name="Zollner A."/>
            <person name="Zumstein E."/>
            <person name="Kleine K."/>
        </authorList>
    </citation>
    <scope>NUCLEOTIDE SEQUENCE [LARGE SCALE GENOMIC DNA]</scope>
    <source>
        <strain>ATCC 204508 / S288c</strain>
    </source>
</reference>
<reference key="2">
    <citation type="journal article" date="2014" name="G3 (Bethesda)">
        <title>The reference genome sequence of Saccharomyces cerevisiae: Then and now.</title>
        <authorList>
            <person name="Engel S.R."/>
            <person name="Dietrich F.S."/>
            <person name="Fisk D.G."/>
            <person name="Binkley G."/>
            <person name="Balakrishnan R."/>
            <person name="Costanzo M.C."/>
            <person name="Dwight S.S."/>
            <person name="Hitz B.C."/>
            <person name="Karra K."/>
            <person name="Nash R.S."/>
            <person name="Weng S."/>
            <person name="Wong E.D."/>
            <person name="Lloyd P."/>
            <person name="Skrzypek M.S."/>
            <person name="Miyasato S.R."/>
            <person name="Simison M."/>
            <person name="Cherry J.M."/>
        </authorList>
    </citation>
    <scope>GENOME REANNOTATION</scope>
    <source>
        <strain>ATCC 204508 / S288c</strain>
    </source>
</reference>
<reference key="3">
    <citation type="journal article" date="2007" name="Genome Res.">
        <title>Approaching a complete repository of sequence-verified protein-encoding clones for Saccharomyces cerevisiae.</title>
        <authorList>
            <person name="Hu Y."/>
            <person name="Rolfs A."/>
            <person name="Bhullar B."/>
            <person name="Murthy T.V.S."/>
            <person name="Zhu C."/>
            <person name="Berger M.F."/>
            <person name="Camargo A.A."/>
            <person name="Kelley F."/>
            <person name="McCarron S."/>
            <person name="Jepson D."/>
            <person name="Richardson A."/>
            <person name="Raphael J."/>
            <person name="Moreira D."/>
            <person name="Taycher E."/>
            <person name="Zuo D."/>
            <person name="Mohr S."/>
            <person name="Kane M.F."/>
            <person name="Williamson J."/>
            <person name="Simpson A.J.G."/>
            <person name="Bulyk M.L."/>
            <person name="Harlow E."/>
            <person name="Marsischky G."/>
            <person name="Kolodner R.D."/>
            <person name="LaBaer J."/>
        </authorList>
    </citation>
    <scope>NUCLEOTIDE SEQUENCE [GENOMIC DNA]</scope>
    <source>
        <strain>ATCC 204508 / S288c</strain>
    </source>
</reference>
<reference key="4">
    <citation type="journal article" date="2002" name="Mol. Cell">
        <title>A caspase-related protease regulates apoptosis in yeast.</title>
        <authorList>
            <person name="Madeo F."/>
            <person name="Herker E."/>
            <person name="Maldener C."/>
            <person name="Wissing S."/>
            <person name="Laechelt S."/>
            <person name="Herlan M."/>
            <person name="Fehr M."/>
            <person name="Lauber K."/>
            <person name="Sigrist S.J."/>
            <person name="Wesselborg S."/>
            <person name="Froehlich K.-U."/>
        </authorList>
    </citation>
    <scope>FUNCTION</scope>
    <scope>CATALYTIC ACTIVITY</scope>
    <scope>ACTIVE SITE</scope>
    <scope>MUTAGENESIS OF CYS-276</scope>
    <scope>PROTEOLYTIC PROCESSING</scope>
</reference>
<reference key="5">
    <citation type="journal article" date="2003" name="Nature">
        <title>Sequencing and comparison of yeast species to identify genes and regulatory elements.</title>
        <authorList>
            <person name="Kellis M."/>
            <person name="Patterson N."/>
            <person name="Endrizzi M."/>
            <person name="Birren B.W."/>
            <person name="Lander E.S."/>
        </authorList>
    </citation>
    <scope>IDENTIFICATION OF PROBABLE INITIATION SITE</scope>
</reference>
<reference key="6">
    <citation type="journal article" date="2003" name="Nature">
        <title>Global analysis of protein localization in budding yeast.</title>
        <authorList>
            <person name="Huh W.-K."/>
            <person name="Falvo J.V."/>
            <person name="Gerke L.C."/>
            <person name="Carroll A.S."/>
            <person name="Howson R.W."/>
            <person name="Weissman J.S."/>
            <person name="O'Shea E.K."/>
        </authorList>
    </citation>
    <scope>SUBCELLULAR LOCATION [LARGE SCALE ANALYSIS]</scope>
</reference>
<reference key="7">
    <citation type="journal article" date="2003" name="Nature">
        <title>Global analysis of protein expression in yeast.</title>
        <authorList>
            <person name="Ghaemmaghami S."/>
            <person name="Huh W.-K."/>
            <person name="Bower K."/>
            <person name="Howson R.W."/>
            <person name="Belle A."/>
            <person name="Dephoure N."/>
            <person name="O'Shea E.K."/>
            <person name="Weissman J.S."/>
        </authorList>
    </citation>
    <scope>LEVEL OF PROTEIN EXPRESSION [LARGE SCALE ANALYSIS]</scope>
</reference>
<reference key="8">
    <citation type="journal article" date="2003" name="Science">
        <title>Finding functional features in Saccharomyces genomes by phylogenetic footprinting.</title>
        <authorList>
            <person name="Cliften P.F."/>
            <person name="Sudarsanam P."/>
            <person name="Desikan A."/>
            <person name="Fulton L."/>
            <person name="Fulton B."/>
            <person name="Majors J."/>
            <person name="Waterston R."/>
            <person name="Cohen B.A."/>
            <person name="Johnston M."/>
        </authorList>
    </citation>
    <scope>IDENTIFICATION OF PROBABLE INITIATION SITE</scope>
</reference>
<reference key="9">
    <citation type="journal article" date="2004" name="FEMS Yeast Res.">
        <title>Involvement of the yeast metacaspase Yca1 in ubp10Delta-programmed cell death.</title>
        <authorList>
            <person name="Bettiga M."/>
            <person name="Calzari L."/>
            <person name="Orlandi I."/>
            <person name="Alberghina L."/>
            <person name="Vai M."/>
        </authorList>
    </citation>
    <scope>FUNCTION</scope>
</reference>
<reference key="10">
    <citation type="journal article" date="2004" name="J. Cell Biol.">
        <title>An AIF orthologue regulates apoptosis in yeast.</title>
        <authorList>
            <person name="Wissing S."/>
            <person name="Ludovico P."/>
            <person name="Herker E."/>
            <person name="Buettner S."/>
            <person name="Engelhardt S.M."/>
            <person name="Decker T."/>
            <person name="Link A."/>
            <person name="Proksch A."/>
            <person name="Rodrigues F."/>
            <person name="Corte-Real M."/>
            <person name="Froehlich K.-U."/>
            <person name="Manns J."/>
            <person name="Cande C."/>
            <person name="Sigrist S.J."/>
            <person name="Kroemer G."/>
            <person name="Madeo F."/>
        </authorList>
    </citation>
    <scope>FUNCTION</scope>
</reference>
<reference key="11">
    <citation type="journal article" date="2004" name="J. Cell Biol.">
        <title>Chronological aging leads to apoptosis in yeast.</title>
        <authorList>
            <person name="Herker E."/>
            <person name="Jungwirth H."/>
            <person name="Lehmann K.A."/>
            <person name="Maldener C."/>
            <person name="Froehlich K.-U."/>
            <person name="Wissing S."/>
            <person name="Buettner S."/>
            <person name="Fehr M."/>
            <person name="Sigrist S.J."/>
            <person name="Madeo F."/>
        </authorList>
    </citation>
    <scope>FUNCTION</scope>
</reference>
<reference key="12">
    <citation type="journal article" date="2004" name="Mol. Biol. Cell">
        <title>Yeast lacking the SRO7/SOP1-encoded tumor suppressor homologue show increased susceptibility to apoptosis-like cell death on exposure to NaCl stress.</title>
        <authorList>
            <person name="Wadskog I."/>
            <person name="Maldener C."/>
            <person name="Proksch A."/>
            <person name="Madeo F."/>
            <person name="Adler L."/>
        </authorList>
    </citation>
    <scope>FUNCTION</scope>
</reference>
<reference key="13">
    <citation type="journal article" date="2005" name="EMBO Rep.">
        <title>Yeast caspase 1 links messenger RNA stability to apoptosis in yeast.</title>
        <authorList>
            <person name="Mazzoni C."/>
            <person name="Herker E."/>
            <person name="Palermo V."/>
            <person name="Jungwirth H."/>
            <person name="Eisenberg T."/>
            <person name="Madeo F."/>
            <person name="Falcone C."/>
        </authorList>
    </citation>
    <scope>FUNCTION</scope>
</reference>
<reference key="14">
    <citation type="journal article" date="2005" name="J. Cell Biol.">
        <title>Viral killer toxins induce caspase-mediated apoptosis in yeast.</title>
        <authorList>
            <person name="Reiter J."/>
            <person name="Herker E."/>
            <person name="Madeo F."/>
            <person name="Schmitt M.J."/>
        </authorList>
    </citation>
    <scope>FUNCTION</scope>
</reference>
<reference key="15">
    <citation type="journal article" date="2005" name="J. Cell Biol.">
        <title>Physiological regulation of yeast cell death in multicellular colonies is triggered by ammonia.</title>
        <authorList>
            <person name="Vachova L."/>
            <person name="Palkova Z."/>
        </authorList>
    </citation>
    <scope>FUNCTION</scope>
</reference>
<reference key="16">
    <citation type="journal article" date="2005" name="J. Cell Sci.">
        <title>Apoptosis in budding yeast caused by defects in initiation of DNA replication.</title>
        <authorList>
            <person name="Weinberger M."/>
            <person name="Ramachandran L."/>
            <person name="Feng L."/>
            <person name="Sharma K."/>
            <person name="Sun X."/>
            <person name="Marchetti M."/>
            <person name="Huberman J.A."/>
            <person name="Burhans W.C."/>
        </authorList>
    </citation>
    <scope>FUNCTION</scope>
</reference>
<reference key="17">
    <citation type="journal article" date="2005" name="Proc. Natl. Acad. Sci. U.S.A.">
        <title>Knockout of caspase-like gene, YCA1, abrogates apoptosis and elevates oxidized proteins in Saccharomyces cerevisiae.</title>
        <authorList>
            <person name="Khan M.A."/>
            <person name="Chock P.B."/>
            <person name="Stadtman E.R."/>
        </authorList>
    </citation>
    <scope>FUNCTION</scope>
</reference>
<reference key="18">
    <citation type="journal article" date="2009" name="Proc. Natl. Acad. Sci. U.S.A.">
        <title>A prion of yeast metacaspase homolog (Mca1p) detected by a genetic screen.</title>
        <authorList>
            <person name="Nemecek J."/>
            <person name="Nakayashiki T."/>
            <person name="Wickner R.B."/>
        </authorList>
    </citation>
    <scope>RETRACTED PAPER</scope>
</reference>
<reference key="19">
    <citation type="journal article" date="2011" name="Proc. Natl. Acad. Sci. U.S.A.">
        <authorList>
            <person name="Nemecek J."/>
            <person name="Nakayashiki T."/>
            <person name="Wickner R.B."/>
        </authorList>
    </citation>
    <scope>RETRACTION NOTICE OF PUBMED:19174511</scope>
</reference>
<reference key="20">
    <citation type="journal article" date="2010" name="Proc. Natl. Acad. Sci. U.S.A.">
        <title>Metacaspase Yca1 is required for clearance of insoluble protein aggregates.</title>
        <authorList>
            <person name="Lee R.E."/>
            <person name="Brunette S."/>
            <person name="Puente L.G."/>
            <person name="Megeney L.A."/>
        </authorList>
    </citation>
    <scope>FUNCTION</scope>
    <scope>DOMAIN PRION</scope>
</reference>
<reference evidence="20" key="21">
    <citation type="journal article" date="2012" name="J. Biol. Chem.">
        <title>Crystal structure of the yeast metacaspase Yca1.</title>
        <authorList>
            <person name="Wong A.H."/>
            <person name="Yan C."/>
            <person name="Shi Y."/>
        </authorList>
    </citation>
    <scope>X-RAY CRYSTALLOGRAPHY (1.68 ANGSTROMS) OF 83-432</scope>
    <scope>PROTEIN SEQUENCE OF 332-336 AND 335-339</scope>
    <scope>FUNCTION</scope>
    <scope>CATALYTIC ACTIVITY</scope>
    <scope>ACTIVITY REGULATION</scope>
    <scope>SUBUNIT</scope>
    <scope>PROTEOLYTIC CLEAVAGE</scope>
    <scope>ACTIVE SITE</scope>
    <scope>MUTAGENESIS OF 2-TYR--LYS-86; ARG-72; LYS-86; HIS-220; CYS-276 AND HIS-277</scope>
</reference>
<reference evidence="21" key="22">
    <citation type="submission" date="2012-05" db="PDB data bank">
        <title>Crystal structure of the metacaspase Yca1.</title>
        <authorList>
            <person name="Wong A.H."/>
            <person name="Yan C.Y."/>
            <person name="Shi Y.G."/>
        </authorList>
    </citation>
    <scope>X-RAY CRYSTALLOGRAPHY (1.62 ANGSTROMS) OF 83-432 OF MUTANT ALA-276</scope>
</reference>
<accession>Q08601</accession>
<accession>D6W2Q6</accession>
<feature type="propeptide" id="PRO_0000268683" evidence="15">
    <location>
        <begin position="1"/>
        <end status="unknown"/>
    </location>
</feature>
<feature type="chain" id="PRO_0000451182" description="Large subunit p20" evidence="15">
    <location>
        <begin position="87"/>
        <end position="331"/>
    </location>
</feature>
<feature type="chain" id="PRO_0000451183" description="Small subunit p10" evidence="15">
    <location>
        <begin position="332"/>
        <end position="432"/>
    </location>
</feature>
<feature type="chain" id="PRO_0000268684" description="Metacaspase-1">
    <location>
        <begin status="unknown"/>
        <end position="432"/>
    </location>
</feature>
<feature type="region of interest" description="Disordered" evidence="1">
    <location>
        <begin position="1"/>
        <end position="70"/>
    </location>
</feature>
<feature type="region of interest" description="Prion domain (PrD)">
    <location>
        <begin position="29"/>
        <end position="131"/>
    </location>
</feature>
<feature type="compositionally biased region" description="Low complexity" evidence="1">
    <location>
        <begin position="1"/>
        <end position="14"/>
    </location>
</feature>
<feature type="compositionally biased region" description="Low complexity" evidence="1">
    <location>
        <begin position="29"/>
        <end position="59"/>
    </location>
</feature>
<feature type="compositionally biased region" description="Pro residues" evidence="1">
    <location>
        <begin position="60"/>
        <end position="70"/>
    </location>
</feature>
<feature type="active site" evidence="19">
    <location>
        <position position="220"/>
    </location>
</feature>
<feature type="active site" evidence="18 19">
    <location>
        <position position="276"/>
    </location>
</feature>
<feature type="site" description="Cleavage; by autolysis" evidence="15">
    <location>
        <begin position="72"/>
        <end position="73"/>
    </location>
</feature>
<feature type="site" description="Cleavage; by autolysis" evidence="15">
    <location>
        <begin position="86"/>
        <end position="87"/>
    </location>
</feature>
<feature type="site" description="Cleavage; by autolysis" evidence="15">
    <location>
        <begin position="331"/>
        <end position="332"/>
    </location>
</feature>
<feature type="site" description="Cleavage; by autolysis" evidence="15">
    <location>
        <begin position="334"/>
        <end position="335"/>
    </location>
</feature>
<feature type="mutagenesis site" description="Does not affect catalytic activity." evidence="15">
    <location>
        <begin position="2"/>
        <end position="86"/>
    </location>
</feature>
<feature type="mutagenesis site" description="Prevents auto-cleavage at Arg-72 but not at Lys-86. Does not affect catalytic activity; when associated with A-86." evidence="15">
    <original>R</original>
    <variation>A</variation>
    <location>
        <position position="72"/>
    </location>
</feature>
<feature type="mutagenesis site" description="Prevents auto-cleavage at Lys-86 but not at Arg-72. Does not affect catalytic activity; when associated with A-72." evidence="15">
    <original>K</original>
    <variation>A</variation>
    <location>
        <position position="86"/>
    </location>
</feature>
<feature type="mutagenesis site" description="Blocks Ca(2+)-stimulated auto-processing and its catalytic activity towards substrates." evidence="2 15">
    <original>H</original>
    <variation>A</variation>
    <location>
        <position position="220"/>
    </location>
</feature>
<feature type="mutagenesis site" description="Blocks Ca(2+)-stimulated auto-processing and its catalytic activity towards substrates." evidence="2 15">
    <original>C</original>
    <variation>A</variation>
    <location>
        <position position="276"/>
    </location>
</feature>
<feature type="mutagenesis site" description="No effect on auto-processing and catalytic activity towards substrates." evidence="15">
    <original>H</original>
    <variation>A</variation>
    <location>
        <position position="277"/>
    </location>
</feature>
<feature type="turn" evidence="22">
    <location>
        <begin position="92"/>
        <end position="94"/>
    </location>
</feature>
<feature type="strand" evidence="22">
    <location>
        <begin position="102"/>
        <end position="104"/>
    </location>
</feature>
<feature type="strand" evidence="23">
    <location>
        <begin position="136"/>
        <end position="142"/>
    </location>
</feature>
<feature type="helix" evidence="23">
    <location>
        <begin position="155"/>
        <end position="167"/>
    </location>
</feature>
<feature type="helix" evidence="23">
    <location>
        <begin position="174"/>
        <end position="176"/>
    </location>
</feature>
<feature type="strand" evidence="23">
    <location>
        <begin position="177"/>
        <end position="181"/>
    </location>
</feature>
<feature type="helix" evidence="23">
    <location>
        <begin position="187"/>
        <end position="189"/>
    </location>
</feature>
<feature type="helix" evidence="23">
    <location>
        <begin position="193"/>
        <end position="204"/>
    </location>
</feature>
<feature type="strand" evidence="23">
    <location>
        <begin position="212"/>
        <end position="219"/>
    </location>
</feature>
<feature type="strand" evidence="23">
    <location>
        <begin position="221"/>
        <end position="223"/>
    </location>
</feature>
<feature type="strand" evidence="23">
    <location>
        <begin position="237"/>
        <end position="239"/>
    </location>
</feature>
<feature type="helix" evidence="23">
    <location>
        <begin position="244"/>
        <end position="247"/>
    </location>
</feature>
<feature type="helix" evidence="23">
    <location>
        <begin position="252"/>
        <end position="259"/>
    </location>
</feature>
<feature type="turn" evidence="23">
    <location>
        <begin position="260"/>
        <end position="262"/>
    </location>
</feature>
<feature type="strand" evidence="23">
    <location>
        <begin position="268"/>
        <end position="273"/>
    </location>
</feature>
<feature type="strand" evidence="23">
    <location>
        <begin position="275"/>
        <end position="277"/>
    </location>
</feature>
<feature type="turn" evidence="23">
    <location>
        <begin position="279"/>
        <end position="282"/>
    </location>
</feature>
<feature type="strand" evidence="23">
    <location>
        <begin position="285"/>
        <end position="289"/>
    </location>
</feature>
<feature type="strand" evidence="23">
    <location>
        <begin position="292"/>
        <end position="295"/>
    </location>
</feature>
<feature type="strand" evidence="23">
    <location>
        <begin position="354"/>
        <end position="362"/>
    </location>
</feature>
<feature type="helix" evidence="23">
    <location>
        <begin position="380"/>
        <end position="391"/>
    </location>
</feature>
<feature type="helix" evidence="23">
    <location>
        <begin position="397"/>
        <end position="408"/>
    </location>
</feature>
<feature type="turn" evidence="23">
    <location>
        <begin position="409"/>
        <end position="411"/>
    </location>
</feature>
<feature type="strand" evidence="23">
    <location>
        <begin position="415"/>
        <end position="422"/>
    </location>
</feature>
<gene>
    <name type="primary">MCA1</name>
    <name type="synonym">YCA1</name>
    <name type="ordered locus">YOR197W</name>
</gene>